<sequence length="348" mass="39027">MGLREKLAELREEGLQDIKQSEDLKRINEIRVKMLGKKGPITSVLRGMRDLSAEERPKVGQFANKVRDELSAAIEEKRAELEQAAMNAKLAAQTIDVTLPGTPVAQGQPHVIQQIIDQVVDLFVSMGYEVAVGDEVEQEVYNFEKLNLPKDHPARDMQDTFYVTPSVLMRTQTSPMQARMLEKHDFSQGPLKMISPGKVYRRDTDDATHSHQFHQIEGMVVGKNITMADLKGTLEAVAQNLFGDKLKVRLRPSYFPFTEPSVEADITCFNCLGKGCAICKQTGWIEVLGAGMVHPNVLKMSGVDPEEYGGFAFGLGPDRFAMLKYGVDDIRNFYQNDVRFLNQFDQKG</sequence>
<organism>
    <name type="scientific">Limosilactobacillus reuteri (strain DSM 20016)</name>
    <name type="common">Lactobacillus reuteri</name>
    <dbReference type="NCBI Taxonomy" id="557436"/>
    <lineage>
        <taxon>Bacteria</taxon>
        <taxon>Bacillati</taxon>
        <taxon>Bacillota</taxon>
        <taxon>Bacilli</taxon>
        <taxon>Lactobacillales</taxon>
        <taxon>Lactobacillaceae</taxon>
        <taxon>Limosilactobacillus</taxon>
    </lineage>
</organism>
<feature type="chain" id="PRO_1000059242" description="Phenylalanine--tRNA ligase alpha subunit">
    <location>
        <begin position="1"/>
        <end position="348"/>
    </location>
</feature>
<feature type="binding site" evidence="1">
    <location>
        <position position="259"/>
    </location>
    <ligand>
        <name>Mg(2+)</name>
        <dbReference type="ChEBI" id="CHEBI:18420"/>
        <note>shared with beta subunit</note>
    </ligand>
</feature>
<accession>A5VKV1</accession>
<comment type="catalytic activity">
    <reaction evidence="1">
        <text>tRNA(Phe) + L-phenylalanine + ATP = L-phenylalanyl-tRNA(Phe) + AMP + diphosphate + H(+)</text>
        <dbReference type="Rhea" id="RHEA:19413"/>
        <dbReference type="Rhea" id="RHEA-COMP:9668"/>
        <dbReference type="Rhea" id="RHEA-COMP:9699"/>
        <dbReference type="ChEBI" id="CHEBI:15378"/>
        <dbReference type="ChEBI" id="CHEBI:30616"/>
        <dbReference type="ChEBI" id="CHEBI:33019"/>
        <dbReference type="ChEBI" id="CHEBI:58095"/>
        <dbReference type="ChEBI" id="CHEBI:78442"/>
        <dbReference type="ChEBI" id="CHEBI:78531"/>
        <dbReference type="ChEBI" id="CHEBI:456215"/>
        <dbReference type="EC" id="6.1.1.20"/>
    </reaction>
</comment>
<comment type="cofactor">
    <cofactor evidence="1">
        <name>Mg(2+)</name>
        <dbReference type="ChEBI" id="CHEBI:18420"/>
    </cofactor>
    <text evidence="1">Binds 2 magnesium ions per tetramer.</text>
</comment>
<comment type="subunit">
    <text evidence="1">Tetramer of two alpha and two beta subunits.</text>
</comment>
<comment type="subcellular location">
    <subcellularLocation>
        <location evidence="1">Cytoplasm</location>
    </subcellularLocation>
</comment>
<comment type="similarity">
    <text evidence="1">Belongs to the class-II aminoacyl-tRNA synthetase family. Phe-tRNA synthetase alpha subunit type 1 subfamily.</text>
</comment>
<evidence type="ECO:0000255" key="1">
    <source>
        <dbReference type="HAMAP-Rule" id="MF_00281"/>
    </source>
</evidence>
<name>SYFA_LIMRD</name>
<gene>
    <name evidence="1" type="primary">pheS</name>
    <name type="ordered locus">Lreu_1218</name>
</gene>
<proteinExistence type="inferred from homology"/>
<keyword id="KW-0030">Aminoacyl-tRNA synthetase</keyword>
<keyword id="KW-0067">ATP-binding</keyword>
<keyword id="KW-0963">Cytoplasm</keyword>
<keyword id="KW-0436">Ligase</keyword>
<keyword id="KW-0460">Magnesium</keyword>
<keyword id="KW-0479">Metal-binding</keyword>
<keyword id="KW-0547">Nucleotide-binding</keyword>
<keyword id="KW-0648">Protein biosynthesis</keyword>
<keyword id="KW-1185">Reference proteome</keyword>
<reference key="1">
    <citation type="journal article" date="2011" name="PLoS Genet.">
        <title>The evolution of host specialization in the vertebrate gut symbiont Lactobacillus reuteri.</title>
        <authorList>
            <person name="Frese S.A."/>
            <person name="Benson A.K."/>
            <person name="Tannock G.W."/>
            <person name="Loach D.M."/>
            <person name="Kim J."/>
            <person name="Zhang M."/>
            <person name="Oh P.L."/>
            <person name="Heng N.C."/>
            <person name="Patil P.B."/>
            <person name="Juge N."/>
            <person name="Mackenzie D.A."/>
            <person name="Pearson B.M."/>
            <person name="Lapidus A."/>
            <person name="Dalin E."/>
            <person name="Tice H."/>
            <person name="Goltsman E."/>
            <person name="Land M."/>
            <person name="Hauser L."/>
            <person name="Ivanova N."/>
            <person name="Kyrpides N.C."/>
            <person name="Walter J."/>
        </authorList>
    </citation>
    <scope>NUCLEOTIDE SEQUENCE [LARGE SCALE GENOMIC DNA]</scope>
    <source>
        <strain>DSM 20016</strain>
    </source>
</reference>
<protein>
    <recommendedName>
        <fullName evidence="1">Phenylalanine--tRNA ligase alpha subunit</fullName>
        <ecNumber evidence="1">6.1.1.20</ecNumber>
    </recommendedName>
    <alternativeName>
        <fullName evidence="1">Phenylalanyl-tRNA synthetase alpha subunit</fullName>
        <shortName evidence="1">PheRS</shortName>
    </alternativeName>
</protein>
<dbReference type="EC" id="6.1.1.20" evidence="1"/>
<dbReference type="EMBL" id="CP000705">
    <property type="protein sequence ID" value="ABQ83475.1"/>
    <property type="molecule type" value="Genomic_DNA"/>
</dbReference>
<dbReference type="RefSeq" id="WP_003668455.1">
    <property type="nucleotide sequence ID" value="NZ_AZDD01000001.1"/>
</dbReference>
<dbReference type="SMR" id="A5VKV1"/>
<dbReference type="STRING" id="557436.Lreu_1218"/>
<dbReference type="KEGG" id="lre:Lreu_1218"/>
<dbReference type="PATRIC" id="fig|557436.17.peg.86"/>
<dbReference type="eggNOG" id="COG0016">
    <property type="taxonomic scope" value="Bacteria"/>
</dbReference>
<dbReference type="HOGENOM" id="CLU_025086_0_1_9"/>
<dbReference type="Proteomes" id="UP000001991">
    <property type="component" value="Chromosome"/>
</dbReference>
<dbReference type="GO" id="GO:0005737">
    <property type="term" value="C:cytoplasm"/>
    <property type="evidence" value="ECO:0007669"/>
    <property type="project" value="UniProtKB-SubCell"/>
</dbReference>
<dbReference type="GO" id="GO:0005524">
    <property type="term" value="F:ATP binding"/>
    <property type="evidence" value="ECO:0007669"/>
    <property type="project" value="UniProtKB-UniRule"/>
</dbReference>
<dbReference type="GO" id="GO:0140096">
    <property type="term" value="F:catalytic activity, acting on a protein"/>
    <property type="evidence" value="ECO:0007669"/>
    <property type="project" value="UniProtKB-ARBA"/>
</dbReference>
<dbReference type="GO" id="GO:0000287">
    <property type="term" value="F:magnesium ion binding"/>
    <property type="evidence" value="ECO:0007669"/>
    <property type="project" value="UniProtKB-UniRule"/>
</dbReference>
<dbReference type="GO" id="GO:0004826">
    <property type="term" value="F:phenylalanine-tRNA ligase activity"/>
    <property type="evidence" value="ECO:0007669"/>
    <property type="project" value="UniProtKB-UniRule"/>
</dbReference>
<dbReference type="GO" id="GO:0016740">
    <property type="term" value="F:transferase activity"/>
    <property type="evidence" value="ECO:0007669"/>
    <property type="project" value="UniProtKB-ARBA"/>
</dbReference>
<dbReference type="GO" id="GO:0000049">
    <property type="term" value="F:tRNA binding"/>
    <property type="evidence" value="ECO:0007669"/>
    <property type="project" value="InterPro"/>
</dbReference>
<dbReference type="GO" id="GO:0006432">
    <property type="term" value="P:phenylalanyl-tRNA aminoacylation"/>
    <property type="evidence" value="ECO:0007669"/>
    <property type="project" value="UniProtKB-UniRule"/>
</dbReference>
<dbReference type="CDD" id="cd00496">
    <property type="entry name" value="PheRS_alpha_core"/>
    <property type="match status" value="1"/>
</dbReference>
<dbReference type="FunFam" id="3.30.930.10:FF:000003">
    <property type="entry name" value="Phenylalanine--tRNA ligase alpha subunit"/>
    <property type="match status" value="1"/>
</dbReference>
<dbReference type="Gene3D" id="3.30.930.10">
    <property type="entry name" value="Bira Bifunctional Protein, Domain 2"/>
    <property type="match status" value="1"/>
</dbReference>
<dbReference type="HAMAP" id="MF_00281">
    <property type="entry name" value="Phe_tRNA_synth_alpha1"/>
    <property type="match status" value="1"/>
</dbReference>
<dbReference type="InterPro" id="IPR006195">
    <property type="entry name" value="aa-tRNA-synth_II"/>
</dbReference>
<dbReference type="InterPro" id="IPR045864">
    <property type="entry name" value="aa-tRNA-synth_II/BPL/LPL"/>
</dbReference>
<dbReference type="InterPro" id="IPR004529">
    <property type="entry name" value="Phe-tRNA-synth_IIc_asu"/>
</dbReference>
<dbReference type="InterPro" id="IPR004188">
    <property type="entry name" value="Phe-tRNA_ligase_II_N"/>
</dbReference>
<dbReference type="InterPro" id="IPR022911">
    <property type="entry name" value="Phe_tRNA_ligase_alpha1_bac"/>
</dbReference>
<dbReference type="InterPro" id="IPR002319">
    <property type="entry name" value="Phenylalanyl-tRNA_Synthase"/>
</dbReference>
<dbReference type="InterPro" id="IPR010978">
    <property type="entry name" value="tRNA-bd_arm"/>
</dbReference>
<dbReference type="NCBIfam" id="TIGR00468">
    <property type="entry name" value="pheS"/>
    <property type="match status" value="1"/>
</dbReference>
<dbReference type="PANTHER" id="PTHR11538:SF41">
    <property type="entry name" value="PHENYLALANINE--TRNA LIGASE, MITOCHONDRIAL"/>
    <property type="match status" value="1"/>
</dbReference>
<dbReference type="PANTHER" id="PTHR11538">
    <property type="entry name" value="PHENYLALANYL-TRNA SYNTHETASE"/>
    <property type="match status" value="1"/>
</dbReference>
<dbReference type="Pfam" id="PF02912">
    <property type="entry name" value="Phe_tRNA-synt_N"/>
    <property type="match status" value="1"/>
</dbReference>
<dbReference type="Pfam" id="PF01409">
    <property type="entry name" value="tRNA-synt_2d"/>
    <property type="match status" value="1"/>
</dbReference>
<dbReference type="SUPFAM" id="SSF55681">
    <property type="entry name" value="Class II aaRS and biotin synthetases"/>
    <property type="match status" value="1"/>
</dbReference>
<dbReference type="SUPFAM" id="SSF46589">
    <property type="entry name" value="tRNA-binding arm"/>
    <property type="match status" value="1"/>
</dbReference>
<dbReference type="PROSITE" id="PS50862">
    <property type="entry name" value="AA_TRNA_LIGASE_II"/>
    <property type="match status" value="1"/>
</dbReference>